<reference key="1">
    <citation type="submission" date="2006-05" db="EMBL/GenBank/DDBJ databases">
        <authorList>
            <consortium name="Genoscope"/>
        </authorList>
    </citation>
    <scope>NUCLEOTIDE SEQUENCE [LARGE SCALE GENOMIC DNA]</scope>
    <source>
        <strain>WH7803</strain>
    </source>
</reference>
<protein>
    <recommendedName>
        <fullName evidence="1">Proton extrusion protein PxcA</fullName>
    </recommendedName>
</protein>
<comment type="function">
    <text evidence="1">Required for H(+) efflux immediately after light irradiation to form a rapid H(+) concentration gradient across the thylakoid membranes. Together with PxcL, contributes to transient H(+) uptake following dark to light transition.</text>
</comment>
<comment type="subcellular location">
    <subcellularLocation>
        <location evidence="1">Cell inner membrane</location>
        <topology evidence="1">Multi-pass membrane protein</topology>
    </subcellularLocation>
</comment>
<comment type="similarity">
    <text evidence="1">Belongs to the CemA family.</text>
</comment>
<sequence length="382" mass="42881">MAGRNWLDTFGRAKSLDVNADLDRGYEAALLIQSLELEYYGDRPIRPDLELSVPSSVQATVLRKFRAAISVCRASLDKLEYQRGELDPQELRQLQLIESVVNRYSPRRTASAPTISRSPDPLPRSLLGIFDTLRRQLNPTAEATLVAGFRRRRDSTLISLKVLLLLILVPLLVQQVSRTYIISPAVDRYAPDLPFLSYPKPQLEEQAVEKLRVYKAEIEFDALLRGDSIPTQEELQKKLSAKAEELKQEADSESTHAVKNVIADLAATVAFVVVCVFSREELRVLRGFFDEAVYGLSDSAKAFAIILFTDIFVGFHSPEGWTVLLDGIANHFGFPARENFILLFIATFPVILATIFKYWIFRYLNRVSPSSVATLRGMNGGG</sequence>
<dbReference type="EMBL" id="CT971583">
    <property type="protein sequence ID" value="CAK23549.1"/>
    <property type="molecule type" value="Genomic_DNA"/>
</dbReference>
<dbReference type="SMR" id="A5GKT4"/>
<dbReference type="STRING" id="32051.SynWH7803_1123"/>
<dbReference type="KEGG" id="syx:SynWH7803_1123"/>
<dbReference type="eggNOG" id="ENOG502Z8DN">
    <property type="taxonomic scope" value="Bacteria"/>
</dbReference>
<dbReference type="HOGENOM" id="CLU_690401_0_0_3"/>
<dbReference type="OrthoDB" id="418298at2"/>
<dbReference type="Proteomes" id="UP000001566">
    <property type="component" value="Chromosome"/>
</dbReference>
<dbReference type="GO" id="GO:0005886">
    <property type="term" value="C:plasma membrane"/>
    <property type="evidence" value="ECO:0007669"/>
    <property type="project" value="UniProtKB-SubCell"/>
</dbReference>
<dbReference type="GO" id="GO:0015078">
    <property type="term" value="F:proton transmembrane transporter activity"/>
    <property type="evidence" value="ECO:0007669"/>
    <property type="project" value="UniProtKB-UniRule"/>
</dbReference>
<dbReference type="HAMAP" id="MF_01308">
    <property type="entry name" value="CemA_PxcA"/>
    <property type="match status" value="1"/>
</dbReference>
<dbReference type="InterPro" id="IPR004282">
    <property type="entry name" value="CemA"/>
</dbReference>
<dbReference type="NCBIfam" id="NF002705">
    <property type="entry name" value="PRK02507.1-4"/>
    <property type="match status" value="1"/>
</dbReference>
<dbReference type="PANTHER" id="PTHR33650:SF2">
    <property type="entry name" value="CHLOROPLAST ENVELOPE MEMBRANE PROTEIN"/>
    <property type="match status" value="1"/>
</dbReference>
<dbReference type="PANTHER" id="PTHR33650">
    <property type="entry name" value="CHLOROPLAST ENVELOPE MEMBRANE PROTEIN-RELATED"/>
    <property type="match status" value="1"/>
</dbReference>
<dbReference type="Pfam" id="PF03040">
    <property type="entry name" value="CemA"/>
    <property type="match status" value="1"/>
</dbReference>
<gene>
    <name evidence="1" type="primary">pxcA</name>
    <name type="ordered locus">SynWH7803_1123</name>
</gene>
<keyword id="KW-0997">Cell inner membrane</keyword>
<keyword id="KW-1003">Cell membrane</keyword>
<keyword id="KW-0375">Hydrogen ion transport</keyword>
<keyword id="KW-0406">Ion transport</keyword>
<keyword id="KW-0472">Membrane</keyword>
<keyword id="KW-1185">Reference proteome</keyword>
<keyword id="KW-0812">Transmembrane</keyword>
<keyword id="KW-1133">Transmembrane helix</keyword>
<keyword id="KW-0813">Transport</keyword>
<organism>
    <name type="scientific">Synechococcus sp. (strain WH7803)</name>
    <dbReference type="NCBI Taxonomy" id="32051"/>
    <lineage>
        <taxon>Bacteria</taxon>
        <taxon>Bacillati</taxon>
        <taxon>Cyanobacteriota</taxon>
        <taxon>Cyanophyceae</taxon>
        <taxon>Synechococcales</taxon>
        <taxon>Synechococcaceae</taxon>
        <taxon>Synechococcus</taxon>
    </lineage>
</organism>
<name>PXCA_SYNPW</name>
<feature type="chain" id="PRO_1000051818" description="Proton extrusion protein PxcA">
    <location>
        <begin position="1"/>
        <end position="382"/>
    </location>
</feature>
<feature type="transmembrane region" description="Helical" evidence="1">
    <location>
        <begin position="156"/>
        <end position="176"/>
    </location>
</feature>
<feature type="transmembrane region" description="Helical" evidence="1">
    <location>
        <begin position="257"/>
        <end position="277"/>
    </location>
</feature>
<feature type="transmembrane region" description="Helical" evidence="1">
    <location>
        <begin position="305"/>
        <end position="325"/>
    </location>
</feature>
<feature type="transmembrane region" description="Helical" evidence="1">
    <location>
        <begin position="340"/>
        <end position="360"/>
    </location>
</feature>
<evidence type="ECO:0000255" key="1">
    <source>
        <dbReference type="HAMAP-Rule" id="MF_01308"/>
    </source>
</evidence>
<accession>A5GKT4</accession>
<proteinExistence type="inferred from homology"/>